<name>Y5986_ARATH</name>
<reference key="1">
    <citation type="journal article" date="1998" name="DNA Res.">
        <title>Structural analysis of Arabidopsis thaliana chromosome 5. IV. Sequence features of the regions of 1,456,315 bp covered by nineteen physically assigned P1 and TAC clones.</title>
        <authorList>
            <person name="Sato S."/>
            <person name="Kaneko T."/>
            <person name="Kotani H."/>
            <person name="Nakamura Y."/>
            <person name="Asamizu E."/>
            <person name="Miyajima N."/>
            <person name="Tabata S."/>
        </authorList>
    </citation>
    <scope>NUCLEOTIDE SEQUENCE [LARGE SCALE GENOMIC DNA]</scope>
    <source>
        <strain>cv. Columbia</strain>
    </source>
</reference>
<reference key="2">
    <citation type="journal article" date="2017" name="Plant J.">
        <title>Araport11: a complete reannotation of the Arabidopsis thaliana reference genome.</title>
        <authorList>
            <person name="Cheng C.Y."/>
            <person name="Krishnakumar V."/>
            <person name="Chan A.P."/>
            <person name="Thibaud-Nissen F."/>
            <person name="Schobel S."/>
            <person name="Town C.D."/>
        </authorList>
    </citation>
    <scope>GENOME REANNOTATION</scope>
    <source>
        <strain>cv. Columbia</strain>
    </source>
</reference>
<reference key="3">
    <citation type="journal article" date="2003" name="Science">
        <title>Empirical analysis of transcriptional activity in the Arabidopsis genome.</title>
        <authorList>
            <person name="Yamada K."/>
            <person name="Lim J."/>
            <person name="Dale J.M."/>
            <person name="Chen H."/>
            <person name="Shinn P."/>
            <person name="Palm C.J."/>
            <person name="Southwick A.M."/>
            <person name="Wu H.C."/>
            <person name="Kim C.J."/>
            <person name="Nguyen M."/>
            <person name="Pham P.K."/>
            <person name="Cheuk R.F."/>
            <person name="Karlin-Newmann G."/>
            <person name="Liu S.X."/>
            <person name="Lam B."/>
            <person name="Sakano H."/>
            <person name="Wu T."/>
            <person name="Yu G."/>
            <person name="Miranda M."/>
            <person name="Quach H.L."/>
            <person name="Tripp M."/>
            <person name="Chang C.H."/>
            <person name="Lee J.M."/>
            <person name="Toriumi M.J."/>
            <person name="Chan M.M."/>
            <person name="Tang C.C."/>
            <person name="Onodera C.S."/>
            <person name="Deng J.M."/>
            <person name="Akiyama K."/>
            <person name="Ansari Y."/>
            <person name="Arakawa T."/>
            <person name="Banh J."/>
            <person name="Banno F."/>
            <person name="Bowser L."/>
            <person name="Brooks S.Y."/>
            <person name="Carninci P."/>
            <person name="Chao Q."/>
            <person name="Choy N."/>
            <person name="Enju A."/>
            <person name="Goldsmith A.D."/>
            <person name="Gurjal M."/>
            <person name="Hansen N.F."/>
            <person name="Hayashizaki Y."/>
            <person name="Johnson-Hopson C."/>
            <person name="Hsuan V.W."/>
            <person name="Iida K."/>
            <person name="Karnes M."/>
            <person name="Khan S."/>
            <person name="Koesema E."/>
            <person name="Ishida J."/>
            <person name="Jiang P.X."/>
            <person name="Jones T."/>
            <person name="Kawai J."/>
            <person name="Kamiya A."/>
            <person name="Meyers C."/>
            <person name="Nakajima M."/>
            <person name="Narusaka M."/>
            <person name="Seki M."/>
            <person name="Sakurai T."/>
            <person name="Satou M."/>
            <person name="Tamse R."/>
            <person name="Vaysberg M."/>
            <person name="Wallender E.K."/>
            <person name="Wong C."/>
            <person name="Yamamura Y."/>
            <person name="Yuan S."/>
            <person name="Shinozaki K."/>
            <person name="Davis R.W."/>
            <person name="Theologis A."/>
            <person name="Ecker J.R."/>
        </authorList>
    </citation>
    <scope>NUCLEOTIDE SEQUENCE [LARGE SCALE MRNA]</scope>
    <source>
        <strain>cv. Columbia</strain>
    </source>
</reference>
<dbReference type="EMBL" id="AB010077">
    <property type="protein sequence ID" value="BAB10211.1"/>
    <property type="molecule type" value="Genomic_DNA"/>
</dbReference>
<dbReference type="EMBL" id="CP002688">
    <property type="protein sequence ID" value="AED94485.1"/>
    <property type="molecule type" value="Genomic_DNA"/>
</dbReference>
<dbReference type="EMBL" id="AY080615">
    <property type="protein sequence ID" value="AAL86299.1"/>
    <property type="molecule type" value="mRNA"/>
</dbReference>
<dbReference type="EMBL" id="AY133745">
    <property type="protein sequence ID" value="AAM91679.1"/>
    <property type="molecule type" value="mRNA"/>
</dbReference>
<dbReference type="RefSeq" id="NP_680368.1">
    <property type="nucleotide sequence ID" value="NM_148063.3"/>
</dbReference>
<dbReference type="SMR" id="Q9FLE8"/>
<dbReference type="FunCoup" id="Q9FLE8">
    <property type="interactions" value="26"/>
</dbReference>
<dbReference type="STRING" id="3702.Q9FLE8"/>
<dbReference type="iPTMnet" id="Q9FLE8"/>
<dbReference type="PaxDb" id="3702-AT5G39865.1"/>
<dbReference type="ProteomicsDB" id="242897"/>
<dbReference type="EnsemblPlants" id="AT5G39865.1">
    <property type="protein sequence ID" value="AT5G39865.1"/>
    <property type="gene ID" value="AT5G39865"/>
</dbReference>
<dbReference type="GeneID" id="833983"/>
<dbReference type="Gramene" id="AT5G39865.1">
    <property type="protein sequence ID" value="AT5G39865.1"/>
    <property type="gene ID" value="AT5G39865"/>
</dbReference>
<dbReference type="KEGG" id="ath:AT5G39865"/>
<dbReference type="Araport" id="AT5G39865"/>
<dbReference type="TAIR" id="AT5G39865"/>
<dbReference type="eggNOG" id="KOG2824">
    <property type="taxonomic scope" value="Eukaryota"/>
</dbReference>
<dbReference type="HOGENOM" id="CLU_029893_0_0_1"/>
<dbReference type="InParanoid" id="Q9FLE8"/>
<dbReference type="OMA" id="DCEMVED"/>
<dbReference type="PhylomeDB" id="Q9FLE8"/>
<dbReference type="PRO" id="PR:Q9FLE8"/>
<dbReference type="Proteomes" id="UP000006548">
    <property type="component" value="Chromosome 5"/>
</dbReference>
<dbReference type="ExpressionAtlas" id="Q9FLE8">
    <property type="expression patterns" value="baseline and differential"/>
</dbReference>
<dbReference type="CDD" id="cd03031">
    <property type="entry name" value="GRX_GRX_like"/>
    <property type="match status" value="1"/>
</dbReference>
<dbReference type="FunFam" id="3.40.30.10:FF:000273">
    <property type="entry name" value="Glutaredoxin family protein"/>
    <property type="match status" value="1"/>
</dbReference>
<dbReference type="Gene3D" id="3.40.30.10">
    <property type="entry name" value="Glutaredoxin"/>
    <property type="match status" value="1"/>
</dbReference>
<dbReference type="InterPro" id="IPR002109">
    <property type="entry name" value="Glutaredoxin"/>
</dbReference>
<dbReference type="InterPro" id="IPR036249">
    <property type="entry name" value="Thioredoxin-like_sf"/>
</dbReference>
<dbReference type="PANTHER" id="PTHR45669">
    <property type="entry name" value="GLUTAREDOXIN DOMAIN-CONTAINING CYSTEINE-RICH PROTEIN CG12206-RELATED"/>
    <property type="match status" value="1"/>
</dbReference>
<dbReference type="PANTHER" id="PTHR45669:SF30">
    <property type="entry name" value="OS04G0641300 PROTEIN"/>
    <property type="match status" value="1"/>
</dbReference>
<dbReference type="Pfam" id="PF00462">
    <property type="entry name" value="Glutaredoxin"/>
    <property type="match status" value="1"/>
</dbReference>
<dbReference type="Pfam" id="PF23733">
    <property type="entry name" value="GRXCR1-2_C"/>
    <property type="match status" value="1"/>
</dbReference>
<dbReference type="SUPFAM" id="SSF52833">
    <property type="entry name" value="Thioredoxin-like"/>
    <property type="match status" value="1"/>
</dbReference>
<dbReference type="PROSITE" id="PS51354">
    <property type="entry name" value="GLUTAREDOXIN_2"/>
    <property type="match status" value="1"/>
</dbReference>
<sequence>MGCASSKNRNRCRNCKGGLSPVIVPRSYSMHVHHPAQHTGDSYHTVALTSSTIGSLSLCDSSLRHFHKHLEDSFYKQRVSDQMGEETLISGNGFLHGDEEKMNLDLQAKVIEAKVWSSTINEKIPKIVAKTPIVTPPGEPETINTWELMEGLEDVSPLRSPNHLRSFSFDFVRIQPSHDHDHDVAVSFDLPKSRFHENVKSSCRVDDLDPPDIVSRFKRKTLGKERVVLYFTSLRGIRKTYEDCCNIRIILKSLGIRIDERDVSMHSGFKDELKKLLEGKFNNGVGITLPRVFLGNKYLGGVEEIKKLNENGELEKLIKDCEMVEDGSPGFGNECEACGDVRFVPCETCSGSCKLYHEGEEEDEGVTEYGFQRCPYCNENGLIRCHVCCE</sequence>
<evidence type="ECO:0000255" key="1">
    <source>
        <dbReference type="PROSITE-ProRule" id="PRU00686"/>
    </source>
</evidence>
<accession>Q9FLE8</accession>
<feature type="chain" id="PRO_0000312002" description="Uncharacterized protein At5g39865">
    <location>
        <begin position="1"/>
        <end position="390"/>
    </location>
</feature>
<feature type="domain" description="Glutaredoxin" evidence="1">
    <location>
        <begin position="215"/>
        <end position="325"/>
    </location>
</feature>
<protein>
    <recommendedName>
        <fullName>Uncharacterized protein At5g39865</fullName>
    </recommendedName>
</protein>
<keyword id="KW-1185">Reference proteome</keyword>
<proteinExistence type="evidence at transcript level"/>
<organism>
    <name type="scientific">Arabidopsis thaliana</name>
    <name type="common">Mouse-ear cress</name>
    <dbReference type="NCBI Taxonomy" id="3702"/>
    <lineage>
        <taxon>Eukaryota</taxon>
        <taxon>Viridiplantae</taxon>
        <taxon>Streptophyta</taxon>
        <taxon>Embryophyta</taxon>
        <taxon>Tracheophyta</taxon>
        <taxon>Spermatophyta</taxon>
        <taxon>Magnoliopsida</taxon>
        <taxon>eudicotyledons</taxon>
        <taxon>Gunneridae</taxon>
        <taxon>Pentapetalae</taxon>
        <taxon>rosids</taxon>
        <taxon>malvids</taxon>
        <taxon>Brassicales</taxon>
        <taxon>Brassicaceae</taxon>
        <taxon>Camelineae</taxon>
        <taxon>Arabidopsis</taxon>
    </lineage>
</organism>
<gene>
    <name type="ordered locus">At5g39865</name>
    <name type="ORF">MYH19.5</name>
</gene>